<geneLocation type="chloroplast"/>
<accession>Q68S09</accession>
<comment type="function">
    <text evidence="1">May control the interaction of photosystem II (PSII) cores with the light-harvesting antenna, regulates electron flow through the 2 photosystem reaction centers. PSII is a light-driven water plastoquinone oxidoreductase, using light energy to abstract electrons from H(2)O, generating a proton gradient subsequently used for ATP formation.</text>
</comment>
<comment type="subunit">
    <text evidence="1">PSII is composed of 1 copy each of membrane proteins PsbA, PsbB, PsbC, PsbD, PsbE, PsbF, PsbH, PsbI, PsbJ, PsbK, PsbL, PsbM, PsbT, PsbY, PsbZ, Psb30/Ycf12, at least 3 peripheral proteins of the oxygen-evolving complex and a large number of cofactors. It forms dimeric complexes.</text>
</comment>
<comment type="subcellular location">
    <subcellularLocation>
        <location evidence="1">Plastid</location>
        <location evidence="1">Chloroplast thylakoid membrane</location>
        <topology evidence="1">Multi-pass membrane protein</topology>
    </subcellularLocation>
</comment>
<comment type="similarity">
    <text evidence="1">Belongs to the PsbZ family.</text>
</comment>
<name>PSBZ_PANGI</name>
<gene>
    <name evidence="1" type="primary">psbZ</name>
    <name type="ORF">PSC0379</name>
</gene>
<sequence>MTLAFQLAVFALIATSSILLIGVPVVFASPDGWSSNKNVVFSGTSLWIGLVFLVGILNSLIS</sequence>
<reference key="1">
    <citation type="journal article" date="2004" name="DNA Res.">
        <title>Complete chloroplast genome sequence from Korea ginseng (Panax schinseng Nees) and comparative analysis of sequence evolution among 17 vascular plants.</title>
        <authorList>
            <person name="Kim K.-J."/>
            <person name="Lee H.-L."/>
        </authorList>
    </citation>
    <scope>NUCLEOTIDE SEQUENCE [LARGE SCALE GENOMIC DNA]</scope>
</reference>
<keyword id="KW-0150">Chloroplast</keyword>
<keyword id="KW-0472">Membrane</keyword>
<keyword id="KW-0602">Photosynthesis</keyword>
<keyword id="KW-0604">Photosystem II</keyword>
<keyword id="KW-0934">Plastid</keyword>
<keyword id="KW-0674">Reaction center</keyword>
<keyword id="KW-0793">Thylakoid</keyword>
<keyword id="KW-0812">Transmembrane</keyword>
<keyword id="KW-1133">Transmembrane helix</keyword>
<protein>
    <recommendedName>
        <fullName evidence="1">Photosystem II reaction center protein Z</fullName>
        <shortName evidence="1">PSII-Z</shortName>
    </recommendedName>
</protein>
<organism>
    <name type="scientific">Panax ginseng</name>
    <name type="common">Korean ginseng</name>
    <dbReference type="NCBI Taxonomy" id="4054"/>
    <lineage>
        <taxon>Eukaryota</taxon>
        <taxon>Viridiplantae</taxon>
        <taxon>Streptophyta</taxon>
        <taxon>Embryophyta</taxon>
        <taxon>Tracheophyta</taxon>
        <taxon>Spermatophyta</taxon>
        <taxon>Magnoliopsida</taxon>
        <taxon>eudicotyledons</taxon>
        <taxon>Gunneridae</taxon>
        <taxon>Pentapetalae</taxon>
        <taxon>asterids</taxon>
        <taxon>campanulids</taxon>
        <taxon>Apiales</taxon>
        <taxon>Araliaceae</taxon>
        <taxon>Panax</taxon>
    </lineage>
</organism>
<proteinExistence type="inferred from homology"/>
<dbReference type="EMBL" id="AY582139">
    <property type="protein sequence ID" value="AAT98506.1"/>
    <property type="molecule type" value="Genomic_DNA"/>
</dbReference>
<dbReference type="RefSeq" id="YP_086963.1">
    <property type="nucleotide sequence ID" value="NC_006290.1"/>
</dbReference>
<dbReference type="SMR" id="Q68S09"/>
<dbReference type="GeneID" id="3021527"/>
<dbReference type="GO" id="GO:0009535">
    <property type="term" value="C:chloroplast thylakoid membrane"/>
    <property type="evidence" value="ECO:0007669"/>
    <property type="project" value="UniProtKB-SubCell"/>
</dbReference>
<dbReference type="GO" id="GO:0009539">
    <property type="term" value="C:photosystem II reaction center"/>
    <property type="evidence" value="ECO:0007669"/>
    <property type="project" value="InterPro"/>
</dbReference>
<dbReference type="GO" id="GO:0015979">
    <property type="term" value="P:photosynthesis"/>
    <property type="evidence" value="ECO:0007669"/>
    <property type="project" value="UniProtKB-UniRule"/>
</dbReference>
<dbReference type="GO" id="GO:0042549">
    <property type="term" value="P:photosystem II stabilization"/>
    <property type="evidence" value="ECO:0007669"/>
    <property type="project" value="InterPro"/>
</dbReference>
<dbReference type="FunFam" id="1.10.287.740:FF:000001">
    <property type="entry name" value="Photosystem II reaction center protein Z"/>
    <property type="match status" value="1"/>
</dbReference>
<dbReference type="Gene3D" id="1.10.287.740">
    <property type="entry name" value="Photosystem II PsbZ, reaction centre"/>
    <property type="match status" value="1"/>
</dbReference>
<dbReference type="HAMAP" id="MF_00644">
    <property type="entry name" value="PSII_PsbZ"/>
    <property type="match status" value="1"/>
</dbReference>
<dbReference type="InterPro" id="IPR002644">
    <property type="entry name" value="PSII_PsbZ"/>
</dbReference>
<dbReference type="InterPro" id="IPR036512">
    <property type="entry name" value="PSII_PsbZ_sf"/>
</dbReference>
<dbReference type="NCBIfam" id="TIGR03043">
    <property type="entry name" value="PS_II_psbZ"/>
    <property type="match status" value="1"/>
</dbReference>
<dbReference type="PANTHER" id="PTHR34971">
    <property type="entry name" value="PHOTOSYSTEM II REACTION CENTER PROTEIN Z"/>
    <property type="match status" value="1"/>
</dbReference>
<dbReference type="PANTHER" id="PTHR34971:SF2">
    <property type="entry name" value="PHOTOSYSTEM II REACTION CENTER PROTEIN Z"/>
    <property type="match status" value="1"/>
</dbReference>
<dbReference type="Pfam" id="PF01737">
    <property type="entry name" value="Ycf9"/>
    <property type="match status" value="1"/>
</dbReference>
<dbReference type="SUPFAM" id="SSF161055">
    <property type="entry name" value="PsbZ-like"/>
    <property type="match status" value="1"/>
</dbReference>
<feature type="chain" id="PRO_0000217721" description="Photosystem II reaction center protein Z">
    <location>
        <begin position="1"/>
        <end position="62"/>
    </location>
</feature>
<feature type="transmembrane region" description="Helical" evidence="1">
    <location>
        <begin position="8"/>
        <end position="28"/>
    </location>
</feature>
<feature type="transmembrane region" description="Helical" evidence="1">
    <location>
        <begin position="41"/>
        <end position="61"/>
    </location>
</feature>
<evidence type="ECO:0000255" key="1">
    <source>
        <dbReference type="HAMAP-Rule" id="MF_00644"/>
    </source>
</evidence>